<organism>
    <name type="scientific">Gloeobacter violaceus (strain ATCC 29082 / PCC 7421)</name>
    <dbReference type="NCBI Taxonomy" id="251221"/>
    <lineage>
        <taxon>Bacteria</taxon>
        <taxon>Bacillati</taxon>
        <taxon>Cyanobacteriota</taxon>
        <taxon>Cyanophyceae</taxon>
        <taxon>Gloeobacterales</taxon>
        <taxon>Gloeobacteraceae</taxon>
        <taxon>Gloeobacter</taxon>
    </lineage>
</organism>
<accession>Q7NI93</accession>
<name>LEU1_GLOVI</name>
<sequence length="538" mass="58035">MFQDRLIIFDTTLRDGEQSPGATLNADEKVEIARQLARLGVDVIEAGFAYASPGDFEAVERVARTVGTEDGPVICSLARAIRSDIQAAAEAIRPAARGRIHTFISTSDIHLEHQLRKSRAEVLAIAAEMVAFAKGFVDDVEFSPMDAGRSAPEYLYRVLEAAIAAGATTVNIPDTVGYLTPAEFGGLIRGITQNVRGIERAVISVHCHNDLGLAVANSLAAIENGARQIECTVNGIGERAGNCSLEEIVMALHVRRQFFNPIFGRPADSTVPLSTIDTRQIYKSSRLVSHLTGMLVQPNKAIVGANAFAHESGIHQDGVLKNRLTYEIMDAETVGVNENRIVLGKHSGRNAFRTRLVELGYELGDADLNRAFLRFKELADKKKTVSDWDIEAVISDEIRLIPEAYRLEQVQVSCGEPGLPTATVRLTGPDGVERVDAAVGTGPVDAVYKAINRLIELPNELIEFSVQSVTAGIDAMGEVTIRVRQDGRTFSGHAANTDIIVASARAYLNALNKLHFALAHPTHSGGALAHPDAAAQKL</sequence>
<keyword id="KW-0028">Amino-acid biosynthesis</keyword>
<keyword id="KW-0100">Branched-chain amino acid biosynthesis</keyword>
<keyword id="KW-0963">Cytoplasm</keyword>
<keyword id="KW-0432">Leucine biosynthesis</keyword>
<keyword id="KW-0464">Manganese</keyword>
<keyword id="KW-0479">Metal-binding</keyword>
<keyword id="KW-1185">Reference proteome</keyword>
<keyword id="KW-0808">Transferase</keyword>
<evidence type="ECO:0000255" key="1">
    <source>
        <dbReference type="HAMAP-Rule" id="MF_01025"/>
    </source>
</evidence>
<dbReference type="EC" id="2.3.3.13" evidence="1"/>
<dbReference type="EMBL" id="BA000045">
    <property type="protein sequence ID" value="BAC90231.1"/>
    <property type="molecule type" value="Genomic_DNA"/>
</dbReference>
<dbReference type="RefSeq" id="NP_925236.1">
    <property type="nucleotide sequence ID" value="NC_005125.1"/>
</dbReference>
<dbReference type="RefSeq" id="WP_011142287.1">
    <property type="nucleotide sequence ID" value="NC_005125.1"/>
</dbReference>
<dbReference type="SMR" id="Q7NI93"/>
<dbReference type="STRING" id="251221.gene:10759785"/>
<dbReference type="EnsemblBacteria" id="BAC90231">
    <property type="protein sequence ID" value="BAC90231"/>
    <property type="gene ID" value="BAC90231"/>
</dbReference>
<dbReference type="KEGG" id="gvi:gll2290"/>
<dbReference type="PATRIC" id="fig|251221.4.peg.2326"/>
<dbReference type="eggNOG" id="COG0119">
    <property type="taxonomic scope" value="Bacteria"/>
</dbReference>
<dbReference type="HOGENOM" id="CLU_022158_0_1_3"/>
<dbReference type="InParanoid" id="Q7NI93"/>
<dbReference type="OrthoDB" id="9804858at2"/>
<dbReference type="PhylomeDB" id="Q7NI93"/>
<dbReference type="UniPathway" id="UPA00048">
    <property type="reaction ID" value="UER00070"/>
</dbReference>
<dbReference type="Proteomes" id="UP000000557">
    <property type="component" value="Chromosome"/>
</dbReference>
<dbReference type="GO" id="GO:0005737">
    <property type="term" value="C:cytoplasm"/>
    <property type="evidence" value="ECO:0007669"/>
    <property type="project" value="UniProtKB-SubCell"/>
</dbReference>
<dbReference type="GO" id="GO:0003852">
    <property type="term" value="F:2-isopropylmalate synthase activity"/>
    <property type="evidence" value="ECO:0000318"/>
    <property type="project" value="GO_Central"/>
</dbReference>
<dbReference type="GO" id="GO:0003985">
    <property type="term" value="F:acetyl-CoA C-acetyltransferase activity"/>
    <property type="evidence" value="ECO:0007669"/>
    <property type="project" value="UniProtKB-UniRule"/>
</dbReference>
<dbReference type="GO" id="GO:0030145">
    <property type="term" value="F:manganese ion binding"/>
    <property type="evidence" value="ECO:0007669"/>
    <property type="project" value="UniProtKB-UniRule"/>
</dbReference>
<dbReference type="GO" id="GO:0009098">
    <property type="term" value="P:L-leucine biosynthetic process"/>
    <property type="evidence" value="ECO:0000318"/>
    <property type="project" value="GO_Central"/>
</dbReference>
<dbReference type="CDD" id="cd07940">
    <property type="entry name" value="DRE_TIM_IPMS"/>
    <property type="match status" value="1"/>
</dbReference>
<dbReference type="FunFam" id="1.10.238.260:FF:000001">
    <property type="entry name" value="2-isopropylmalate synthase"/>
    <property type="match status" value="1"/>
</dbReference>
<dbReference type="FunFam" id="3.20.20.70:FF:000010">
    <property type="entry name" value="2-isopropylmalate synthase"/>
    <property type="match status" value="1"/>
</dbReference>
<dbReference type="FunFam" id="3.30.160.270:FF:000001">
    <property type="entry name" value="2-isopropylmalate synthase"/>
    <property type="match status" value="1"/>
</dbReference>
<dbReference type="Gene3D" id="1.10.238.260">
    <property type="match status" value="1"/>
</dbReference>
<dbReference type="Gene3D" id="3.30.160.270">
    <property type="match status" value="1"/>
</dbReference>
<dbReference type="Gene3D" id="3.20.20.70">
    <property type="entry name" value="Aldolase class I"/>
    <property type="match status" value="1"/>
</dbReference>
<dbReference type="HAMAP" id="MF_01025">
    <property type="entry name" value="LeuA_type1"/>
    <property type="match status" value="1"/>
</dbReference>
<dbReference type="InterPro" id="IPR050073">
    <property type="entry name" value="2-IPM_HCS-like"/>
</dbReference>
<dbReference type="InterPro" id="IPR013709">
    <property type="entry name" value="2-isopropylmalate_synth_dimer"/>
</dbReference>
<dbReference type="InterPro" id="IPR002034">
    <property type="entry name" value="AIPM/Hcit_synth_CS"/>
</dbReference>
<dbReference type="InterPro" id="IPR013785">
    <property type="entry name" value="Aldolase_TIM"/>
</dbReference>
<dbReference type="InterPro" id="IPR054691">
    <property type="entry name" value="LeuA/HCS_post-cat"/>
</dbReference>
<dbReference type="InterPro" id="IPR036230">
    <property type="entry name" value="LeuA_allosteric_dom_sf"/>
</dbReference>
<dbReference type="InterPro" id="IPR005671">
    <property type="entry name" value="LeuA_bact_synth"/>
</dbReference>
<dbReference type="InterPro" id="IPR000891">
    <property type="entry name" value="PYR_CT"/>
</dbReference>
<dbReference type="NCBIfam" id="TIGR00973">
    <property type="entry name" value="leuA_bact"/>
    <property type="match status" value="1"/>
</dbReference>
<dbReference type="NCBIfam" id="NF002086">
    <property type="entry name" value="PRK00915.1-3"/>
    <property type="match status" value="1"/>
</dbReference>
<dbReference type="PANTHER" id="PTHR10277:SF9">
    <property type="entry name" value="2-ISOPROPYLMALATE SYNTHASE 1, CHLOROPLASTIC-RELATED"/>
    <property type="match status" value="1"/>
</dbReference>
<dbReference type="PANTHER" id="PTHR10277">
    <property type="entry name" value="HOMOCITRATE SYNTHASE-RELATED"/>
    <property type="match status" value="1"/>
</dbReference>
<dbReference type="Pfam" id="PF22617">
    <property type="entry name" value="HCS_D2"/>
    <property type="match status" value="1"/>
</dbReference>
<dbReference type="Pfam" id="PF00682">
    <property type="entry name" value="HMGL-like"/>
    <property type="match status" value="1"/>
</dbReference>
<dbReference type="Pfam" id="PF08502">
    <property type="entry name" value="LeuA_dimer"/>
    <property type="match status" value="1"/>
</dbReference>
<dbReference type="SMART" id="SM00917">
    <property type="entry name" value="LeuA_dimer"/>
    <property type="match status" value="1"/>
</dbReference>
<dbReference type="SUPFAM" id="SSF110921">
    <property type="entry name" value="2-isopropylmalate synthase LeuA, allosteric (dimerisation) domain"/>
    <property type="match status" value="1"/>
</dbReference>
<dbReference type="SUPFAM" id="SSF51569">
    <property type="entry name" value="Aldolase"/>
    <property type="match status" value="1"/>
</dbReference>
<dbReference type="PROSITE" id="PS00815">
    <property type="entry name" value="AIPM_HOMOCIT_SYNTH_1"/>
    <property type="match status" value="1"/>
</dbReference>
<dbReference type="PROSITE" id="PS00816">
    <property type="entry name" value="AIPM_HOMOCIT_SYNTH_2"/>
    <property type="match status" value="1"/>
</dbReference>
<dbReference type="PROSITE" id="PS50991">
    <property type="entry name" value="PYR_CT"/>
    <property type="match status" value="1"/>
</dbReference>
<gene>
    <name evidence="1" type="primary">leuA</name>
    <name type="ordered locus">gll2290</name>
</gene>
<protein>
    <recommendedName>
        <fullName evidence="1">2-isopropylmalate synthase</fullName>
        <ecNumber evidence="1">2.3.3.13</ecNumber>
    </recommendedName>
    <alternativeName>
        <fullName evidence="1">Alpha-IPM synthase</fullName>
    </alternativeName>
    <alternativeName>
        <fullName evidence="1">Alpha-isopropylmalate synthase</fullName>
    </alternativeName>
</protein>
<reference key="1">
    <citation type="journal article" date="2003" name="DNA Res.">
        <title>Complete genome structure of Gloeobacter violaceus PCC 7421, a cyanobacterium that lacks thylakoids.</title>
        <authorList>
            <person name="Nakamura Y."/>
            <person name="Kaneko T."/>
            <person name="Sato S."/>
            <person name="Mimuro M."/>
            <person name="Miyashita H."/>
            <person name="Tsuchiya T."/>
            <person name="Sasamoto S."/>
            <person name="Watanabe A."/>
            <person name="Kawashima K."/>
            <person name="Kishida Y."/>
            <person name="Kiyokawa C."/>
            <person name="Kohara M."/>
            <person name="Matsumoto M."/>
            <person name="Matsuno A."/>
            <person name="Nakazaki N."/>
            <person name="Shimpo S."/>
            <person name="Takeuchi C."/>
            <person name="Yamada M."/>
            <person name="Tabata S."/>
        </authorList>
    </citation>
    <scope>NUCLEOTIDE SEQUENCE [LARGE SCALE GENOMIC DNA]</scope>
    <source>
        <strain>ATCC 29082 / PCC 7421</strain>
    </source>
</reference>
<feature type="chain" id="PRO_0000140354" description="2-isopropylmalate synthase">
    <location>
        <begin position="1"/>
        <end position="538"/>
    </location>
</feature>
<feature type="domain" description="Pyruvate carboxyltransferase" evidence="1">
    <location>
        <begin position="6"/>
        <end position="277"/>
    </location>
</feature>
<feature type="region of interest" description="Regulatory domain" evidence="1">
    <location>
        <begin position="406"/>
        <end position="538"/>
    </location>
</feature>
<feature type="binding site" evidence="1">
    <location>
        <position position="15"/>
    </location>
    <ligand>
        <name>Mn(2+)</name>
        <dbReference type="ChEBI" id="CHEBI:29035"/>
    </ligand>
</feature>
<feature type="binding site" evidence="1">
    <location>
        <position position="206"/>
    </location>
    <ligand>
        <name>Mn(2+)</name>
        <dbReference type="ChEBI" id="CHEBI:29035"/>
    </ligand>
</feature>
<feature type="binding site" evidence="1">
    <location>
        <position position="208"/>
    </location>
    <ligand>
        <name>Mn(2+)</name>
        <dbReference type="ChEBI" id="CHEBI:29035"/>
    </ligand>
</feature>
<feature type="binding site" evidence="1">
    <location>
        <position position="242"/>
    </location>
    <ligand>
        <name>Mn(2+)</name>
        <dbReference type="ChEBI" id="CHEBI:29035"/>
    </ligand>
</feature>
<proteinExistence type="inferred from homology"/>
<comment type="function">
    <text evidence="1">Catalyzes the condensation of the acetyl group of acetyl-CoA with 3-methyl-2-oxobutanoate (2-ketoisovalerate) to form 3-carboxy-3-hydroxy-4-methylpentanoate (2-isopropylmalate).</text>
</comment>
<comment type="catalytic activity">
    <reaction evidence="1">
        <text>3-methyl-2-oxobutanoate + acetyl-CoA + H2O = (2S)-2-isopropylmalate + CoA + H(+)</text>
        <dbReference type="Rhea" id="RHEA:21524"/>
        <dbReference type="ChEBI" id="CHEBI:1178"/>
        <dbReference type="ChEBI" id="CHEBI:11851"/>
        <dbReference type="ChEBI" id="CHEBI:15377"/>
        <dbReference type="ChEBI" id="CHEBI:15378"/>
        <dbReference type="ChEBI" id="CHEBI:57287"/>
        <dbReference type="ChEBI" id="CHEBI:57288"/>
        <dbReference type="EC" id="2.3.3.13"/>
    </reaction>
</comment>
<comment type="cofactor">
    <cofactor evidence="1">
        <name>Mn(2+)</name>
        <dbReference type="ChEBI" id="CHEBI:29035"/>
    </cofactor>
</comment>
<comment type="pathway">
    <text evidence="1">Amino-acid biosynthesis; L-leucine biosynthesis; L-leucine from 3-methyl-2-oxobutanoate: step 1/4.</text>
</comment>
<comment type="subunit">
    <text evidence="1">Homodimer.</text>
</comment>
<comment type="subcellular location">
    <subcellularLocation>
        <location evidence="1">Cytoplasm</location>
    </subcellularLocation>
</comment>
<comment type="similarity">
    <text evidence="1">Belongs to the alpha-IPM synthase/homocitrate synthase family. LeuA type 1 subfamily.</text>
</comment>